<name>PROB_THEP3</name>
<gene>
    <name evidence="1" type="primary">proB</name>
    <name type="ordered locus">Teth39_1082</name>
</gene>
<protein>
    <recommendedName>
        <fullName evidence="1">Glutamate 5-kinase</fullName>
        <ecNumber evidence="1">2.7.2.11</ecNumber>
    </recommendedName>
    <alternativeName>
        <fullName evidence="1">Gamma-glutamyl kinase</fullName>
        <shortName evidence="1">GK</shortName>
    </alternativeName>
</protein>
<sequence>MRIVVKVGTSTLTYENGKLNLEIMEKLVRQIANLLNRGEEVVLVTSGAIGAGMGKLNLKEKPKTIPEKQSLAAIGQGLLIEIYEKFFNEYGKITAQVLLTKEDFSDRRRYLNVSYTLSNLLKWGVVPIINENDTVTVDEIKIGDNDTLAALLASLVEADILIILTDIDGLYDKDPRIYKEAKIIEVVEEFSDELFKIAGSAGTKRGTGGMYTKIQAAKICWNSGVKMIIANGKIDNVLNQIANGEKIGTTFLPMKKPISSRKVWIAFNAKVSGRLFIDEGAAKAIIKHGKSLLPSGVVKTEGDYDVGDCVAVVDHQEKEIARGLINYSSEEVEKIKGCKTHEIEKILGYKYYDEVIHRDNLVILERGEKFGS</sequence>
<proteinExistence type="inferred from homology"/>
<accession>B0K9C4</accession>
<evidence type="ECO:0000255" key="1">
    <source>
        <dbReference type="HAMAP-Rule" id="MF_00456"/>
    </source>
</evidence>
<feature type="chain" id="PRO_1000193711" description="Glutamate 5-kinase">
    <location>
        <begin position="1"/>
        <end position="372"/>
    </location>
</feature>
<feature type="domain" description="PUA" evidence="1">
    <location>
        <begin position="272"/>
        <end position="350"/>
    </location>
</feature>
<feature type="binding site" evidence="1">
    <location>
        <position position="6"/>
    </location>
    <ligand>
        <name>ATP</name>
        <dbReference type="ChEBI" id="CHEBI:30616"/>
    </ligand>
</feature>
<feature type="binding site" evidence="1">
    <location>
        <position position="46"/>
    </location>
    <ligand>
        <name>substrate</name>
    </ligand>
</feature>
<feature type="binding site" evidence="1">
    <location>
        <position position="133"/>
    </location>
    <ligand>
        <name>substrate</name>
    </ligand>
</feature>
<feature type="binding site" evidence="1">
    <location>
        <position position="145"/>
    </location>
    <ligand>
        <name>substrate</name>
    </ligand>
</feature>
<feature type="binding site" evidence="1">
    <location>
        <begin position="165"/>
        <end position="166"/>
    </location>
    <ligand>
        <name>ATP</name>
        <dbReference type="ChEBI" id="CHEBI:30616"/>
    </ligand>
</feature>
<feature type="binding site" evidence="1">
    <location>
        <begin position="207"/>
        <end position="213"/>
    </location>
    <ligand>
        <name>ATP</name>
        <dbReference type="ChEBI" id="CHEBI:30616"/>
    </ligand>
</feature>
<comment type="function">
    <text evidence="1">Catalyzes the transfer of a phosphate group to glutamate to form L-glutamate 5-phosphate.</text>
</comment>
<comment type="catalytic activity">
    <reaction evidence="1">
        <text>L-glutamate + ATP = L-glutamyl 5-phosphate + ADP</text>
        <dbReference type="Rhea" id="RHEA:14877"/>
        <dbReference type="ChEBI" id="CHEBI:29985"/>
        <dbReference type="ChEBI" id="CHEBI:30616"/>
        <dbReference type="ChEBI" id="CHEBI:58274"/>
        <dbReference type="ChEBI" id="CHEBI:456216"/>
        <dbReference type="EC" id="2.7.2.11"/>
    </reaction>
</comment>
<comment type="pathway">
    <text evidence="1">Amino-acid biosynthesis; L-proline biosynthesis; L-glutamate 5-semialdehyde from L-glutamate: step 1/2.</text>
</comment>
<comment type="subcellular location">
    <subcellularLocation>
        <location evidence="1">Cytoplasm</location>
    </subcellularLocation>
</comment>
<comment type="similarity">
    <text evidence="1">Belongs to the glutamate 5-kinase family.</text>
</comment>
<keyword id="KW-0028">Amino-acid biosynthesis</keyword>
<keyword id="KW-0067">ATP-binding</keyword>
<keyword id="KW-0963">Cytoplasm</keyword>
<keyword id="KW-0418">Kinase</keyword>
<keyword id="KW-0547">Nucleotide-binding</keyword>
<keyword id="KW-0641">Proline biosynthesis</keyword>
<keyword id="KW-1185">Reference proteome</keyword>
<keyword id="KW-0808">Transferase</keyword>
<dbReference type="EC" id="2.7.2.11" evidence="1"/>
<dbReference type="EMBL" id="CP000924">
    <property type="protein sequence ID" value="ABY94737.1"/>
    <property type="molecule type" value="Genomic_DNA"/>
</dbReference>
<dbReference type="RefSeq" id="WP_009052326.1">
    <property type="nucleotide sequence ID" value="NC_010321.1"/>
</dbReference>
<dbReference type="SMR" id="B0K9C4"/>
<dbReference type="STRING" id="340099.Teth39_1082"/>
<dbReference type="KEGG" id="tpd:Teth39_1082"/>
<dbReference type="eggNOG" id="COG0263">
    <property type="taxonomic scope" value="Bacteria"/>
</dbReference>
<dbReference type="HOGENOM" id="CLU_025400_2_0_9"/>
<dbReference type="UniPathway" id="UPA00098">
    <property type="reaction ID" value="UER00359"/>
</dbReference>
<dbReference type="Proteomes" id="UP000002156">
    <property type="component" value="Chromosome"/>
</dbReference>
<dbReference type="GO" id="GO:0005829">
    <property type="term" value="C:cytosol"/>
    <property type="evidence" value="ECO:0007669"/>
    <property type="project" value="TreeGrafter"/>
</dbReference>
<dbReference type="GO" id="GO:0005524">
    <property type="term" value="F:ATP binding"/>
    <property type="evidence" value="ECO:0007669"/>
    <property type="project" value="UniProtKB-KW"/>
</dbReference>
<dbReference type="GO" id="GO:0004349">
    <property type="term" value="F:glutamate 5-kinase activity"/>
    <property type="evidence" value="ECO:0007669"/>
    <property type="project" value="UniProtKB-UniRule"/>
</dbReference>
<dbReference type="GO" id="GO:0003723">
    <property type="term" value="F:RNA binding"/>
    <property type="evidence" value="ECO:0007669"/>
    <property type="project" value="InterPro"/>
</dbReference>
<dbReference type="GO" id="GO:0055129">
    <property type="term" value="P:L-proline biosynthetic process"/>
    <property type="evidence" value="ECO:0007669"/>
    <property type="project" value="UniProtKB-UniRule"/>
</dbReference>
<dbReference type="CDD" id="cd04242">
    <property type="entry name" value="AAK_G5K_ProB"/>
    <property type="match status" value="1"/>
</dbReference>
<dbReference type="CDD" id="cd21157">
    <property type="entry name" value="PUA_G5K"/>
    <property type="match status" value="1"/>
</dbReference>
<dbReference type="FunFam" id="2.30.130.10:FF:000007">
    <property type="entry name" value="Glutamate 5-kinase"/>
    <property type="match status" value="1"/>
</dbReference>
<dbReference type="FunFam" id="3.40.1160.10:FF:000018">
    <property type="entry name" value="Glutamate 5-kinase"/>
    <property type="match status" value="1"/>
</dbReference>
<dbReference type="Gene3D" id="3.40.1160.10">
    <property type="entry name" value="Acetylglutamate kinase-like"/>
    <property type="match status" value="2"/>
</dbReference>
<dbReference type="Gene3D" id="2.30.130.10">
    <property type="entry name" value="PUA domain"/>
    <property type="match status" value="1"/>
</dbReference>
<dbReference type="HAMAP" id="MF_00456">
    <property type="entry name" value="ProB"/>
    <property type="match status" value="1"/>
</dbReference>
<dbReference type="InterPro" id="IPR036393">
    <property type="entry name" value="AceGlu_kinase-like_sf"/>
</dbReference>
<dbReference type="InterPro" id="IPR001048">
    <property type="entry name" value="Asp/Glu/Uridylate_kinase"/>
</dbReference>
<dbReference type="InterPro" id="IPR041739">
    <property type="entry name" value="G5K_ProB"/>
</dbReference>
<dbReference type="InterPro" id="IPR001057">
    <property type="entry name" value="Glu/AcGlu_kinase"/>
</dbReference>
<dbReference type="InterPro" id="IPR011529">
    <property type="entry name" value="Glu_5kinase"/>
</dbReference>
<dbReference type="InterPro" id="IPR005715">
    <property type="entry name" value="Glu_5kinase/COase_Synthase"/>
</dbReference>
<dbReference type="InterPro" id="IPR019797">
    <property type="entry name" value="Glutamate_5-kinase_CS"/>
</dbReference>
<dbReference type="InterPro" id="IPR002478">
    <property type="entry name" value="PUA"/>
</dbReference>
<dbReference type="InterPro" id="IPR015947">
    <property type="entry name" value="PUA-like_sf"/>
</dbReference>
<dbReference type="InterPro" id="IPR036974">
    <property type="entry name" value="PUA_sf"/>
</dbReference>
<dbReference type="NCBIfam" id="TIGR01027">
    <property type="entry name" value="proB"/>
    <property type="match status" value="1"/>
</dbReference>
<dbReference type="PANTHER" id="PTHR43654">
    <property type="entry name" value="GLUTAMATE 5-KINASE"/>
    <property type="match status" value="1"/>
</dbReference>
<dbReference type="PANTHER" id="PTHR43654:SF1">
    <property type="entry name" value="ISOPENTENYL PHOSPHATE KINASE"/>
    <property type="match status" value="1"/>
</dbReference>
<dbReference type="Pfam" id="PF00696">
    <property type="entry name" value="AA_kinase"/>
    <property type="match status" value="1"/>
</dbReference>
<dbReference type="Pfam" id="PF01472">
    <property type="entry name" value="PUA"/>
    <property type="match status" value="1"/>
</dbReference>
<dbReference type="PIRSF" id="PIRSF000729">
    <property type="entry name" value="GK"/>
    <property type="match status" value="1"/>
</dbReference>
<dbReference type="PRINTS" id="PR00474">
    <property type="entry name" value="GLU5KINASE"/>
</dbReference>
<dbReference type="SMART" id="SM00359">
    <property type="entry name" value="PUA"/>
    <property type="match status" value="1"/>
</dbReference>
<dbReference type="SUPFAM" id="SSF53633">
    <property type="entry name" value="Carbamate kinase-like"/>
    <property type="match status" value="1"/>
</dbReference>
<dbReference type="SUPFAM" id="SSF88697">
    <property type="entry name" value="PUA domain-like"/>
    <property type="match status" value="1"/>
</dbReference>
<dbReference type="PROSITE" id="PS00902">
    <property type="entry name" value="GLUTAMATE_5_KINASE"/>
    <property type="match status" value="1"/>
</dbReference>
<dbReference type="PROSITE" id="PS50890">
    <property type="entry name" value="PUA"/>
    <property type="match status" value="1"/>
</dbReference>
<reference key="1">
    <citation type="submission" date="2008-01" db="EMBL/GenBank/DDBJ databases">
        <title>Complete sequence of Thermoanaerobacter pseudethanolicus 39E.</title>
        <authorList>
            <person name="Copeland A."/>
            <person name="Lucas S."/>
            <person name="Lapidus A."/>
            <person name="Barry K."/>
            <person name="Glavina del Rio T."/>
            <person name="Dalin E."/>
            <person name="Tice H."/>
            <person name="Pitluck S."/>
            <person name="Bruce D."/>
            <person name="Goodwin L."/>
            <person name="Saunders E."/>
            <person name="Brettin T."/>
            <person name="Detter J.C."/>
            <person name="Han C."/>
            <person name="Schmutz J."/>
            <person name="Larimer F."/>
            <person name="Land M."/>
            <person name="Hauser L."/>
            <person name="Kyrpides N."/>
            <person name="Lykidis A."/>
            <person name="Hemme C."/>
            <person name="Fields M.W."/>
            <person name="He Z."/>
            <person name="Zhou J."/>
            <person name="Richardson P."/>
        </authorList>
    </citation>
    <scope>NUCLEOTIDE SEQUENCE [LARGE SCALE GENOMIC DNA]</scope>
    <source>
        <strain>ATCC 33223 / DSM 2355 / 39E</strain>
    </source>
</reference>
<organism>
    <name type="scientific">Thermoanaerobacter pseudethanolicus (strain ATCC 33223 / 39E)</name>
    <name type="common">Clostridium thermohydrosulfuricum</name>
    <dbReference type="NCBI Taxonomy" id="340099"/>
    <lineage>
        <taxon>Bacteria</taxon>
        <taxon>Bacillati</taxon>
        <taxon>Bacillota</taxon>
        <taxon>Clostridia</taxon>
        <taxon>Thermoanaerobacterales</taxon>
        <taxon>Thermoanaerobacteraceae</taxon>
        <taxon>Thermoanaerobacter</taxon>
    </lineage>
</organism>